<reference key="1">
    <citation type="journal article" date="1991" name="Mol. Microbiol.">
        <title>Gene sequences and comparison of the fimbrial subunits representative of Bacteroides nodosus serotypes A to I: class I and class II strains.</title>
        <authorList>
            <person name="Mattick J.S."/>
            <person name="Anderson B.J."/>
            <person name="Cox P.T."/>
            <person name="Dalrymple B.P."/>
            <person name="Bills M.M."/>
            <person name="Hobbs M."/>
            <person name="Egerton J.R."/>
        </authorList>
    </citation>
    <scope>NUCLEOTIDE SEQUENCE [GENOMIC DNA]</scope>
    <source>
        <strain>Serogroup C2 isolate VCS1617</strain>
    </source>
</reference>
<proteinExistence type="inferred from homology"/>
<protein>
    <recommendedName>
        <fullName>Type IV major fimbrial protein FimA</fullName>
    </recommendedName>
    <alternativeName>
        <fullName>Pilin</fullName>
    </alternativeName>
    <alternativeName>
        <fullName>Serogroup C2</fullName>
    </alternativeName>
</protein>
<accession>P17824</accession>
<keyword id="KW-1015">Disulfide bond</keyword>
<keyword id="KW-0281">Fimbrium</keyword>
<keyword id="KW-0472">Membrane</keyword>
<keyword id="KW-0488">Methylation</keyword>
<keyword id="KW-0812">Transmembrane</keyword>
<keyword id="KW-1133">Transmembrane helix</keyword>
<feature type="propeptide" id="PRO_0000024125" description="Leader sequence" evidence="4">
    <location>
        <begin position="1"/>
        <end position="7"/>
    </location>
</feature>
<feature type="chain" id="PRO_0000024126" description="Type IV major fimbrial protein FimA">
    <location>
        <begin position="8"/>
        <end position="160"/>
    </location>
</feature>
<feature type="transmembrane region" description="Helical" evidence="3">
    <location>
        <begin position="8"/>
        <end position="28"/>
    </location>
</feature>
<feature type="modified residue" description="N-methylphenylalanine" evidence="4">
    <location>
        <position position="8"/>
    </location>
</feature>
<feature type="disulfide bond" evidence="2">
    <location>
        <begin position="63"/>
        <end position="106"/>
    </location>
</feature>
<sequence length="160" mass="16896">MKSLQKGFTLIELMIVVAIIGILAAFAIPAYNDYIARTQVSEGVSLADGLKIRIADNLQDGDCVTKGDSSTGEVGNEDKGKYALATILGTPAQNLSELKAEDPNGCQVKIEYGKGTSGGSVSALINNTELVLAQLANGSYKKESSTVKDKFLPKALKENK</sequence>
<dbReference type="EMBL" id="X52406">
    <property type="protein sequence ID" value="CAA36654.1"/>
    <property type="molecule type" value="Genomic_DNA"/>
</dbReference>
<dbReference type="PIR" id="S15261">
    <property type="entry name" value="S15261"/>
</dbReference>
<dbReference type="SMR" id="P17824"/>
<dbReference type="GO" id="GO:0016020">
    <property type="term" value="C:membrane"/>
    <property type="evidence" value="ECO:0007669"/>
    <property type="project" value="UniProtKB-SubCell"/>
</dbReference>
<dbReference type="GO" id="GO:0009289">
    <property type="term" value="C:pilus"/>
    <property type="evidence" value="ECO:0007669"/>
    <property type="project" value="UniProtKB-SubCell"/>
</dbReference>
<dbReference type="GO" id="GO:0007155">
    <property type="term" value="P:cell adhesion"/>
    <property type="evidence" value="ECO:0007669"/>
    <property type="project" value="InterPro"/>
</dbReference>
<dbReference type="Gene3D" id="3.30.700.10">
    <property type="entry name" value="Glycoprotein, Type 4 Pilin"/>
    <property type="match status" value="1"/>
</dbReference>
<dbReference type="InterPro" id="IPR012902">
    <property type="entry name" value="N_methyl_site"/>
</dbReference>
<dbReference type="InterPro" id="IPR001082">
    <property type="entry name" value="Pilin"/>
</dbReference>
<dbReference type="InterPro" id="IPR045584">
    <property type="entry name" value="Pilin-like"/>
</dbReference>
<dbReference type="InterPro" id="IPR050470">
    <property type="entry name" value="T4P/T2SS_Core"/>
</dbReference>
<dbReference type="NCBIfam" id="TIGR02532">
    <property type="entry name" value="IV_pilin_GFxxxE"/>
    <property type="match status" value="1"/>
</dbReference>
<dbReference type="PANTHER" id="PTHR30093">
    <property type="entry name" value="GENERAL SECRETION PATHWAY PROTEIN G"/>
    <property type="match status" value="1"/>
</dbReference>
<dbReference type="PANTHER" id="PTHR30093:SF34">
    <property type="entry name" value="PREPILIN PEPTIDASE-DEPENDENT PROTEIN D"/>
    <property type="match status" value="1"/>
</dbReference>
<dbReference type="Pfam" id="PF07963">
    <property type="entry name" value="N_methyl"/>
    <property type="match status" value="1"/>
</dbReference>
<dbReference type="Pfam" id="PF00114">
    <property type="entry name" value="Pilin"/>
    <property type="match status" value="1"/>
</dbReference>
<dbReference type="SUPFAM" id="SSF54523">
    <property type="entry name" value="Pili subunits"/>
    <property type="match status" value="1"/>
</dbReference>
<dbReference type="PROSITE" id="PS00409">
    <property type="entry name" value="PROKAR_NTER_METHYL"/>
    <property type="match status" value="1"/>
</dbReference>
<evidence type="ECO:0000250" key="1">
    <source>
        <dbReference type="UniProtKB" id="A5EWR9"/>
    </source>
</evidence>
<evidence type="ECO:0000250" key="2">
    <source>
        <dbReference type="UniProtKB" id="P02975"/>
    </source>
</evidence>
<evidence type="ECO:0000255" key="3"/>
<evidence type="ECO:0000255" key="4">
    <source>
        <dbReference type="PROSITE-ProRule" id="PRU01070"/>
    </source>
</evidence>
<evidence type="ECO:0000305" key="5"/>
<comment type="function">
    <text evidence="1">Major component of the type IV fimbriae that plays an essential role in twitching motility, natural transformation, and protease secretion.</text>
</comment>
<comment type="subunit">
    <text>The pili are polar flexible filaments of about 5.4 nanometers diameter and 2.5 micrometers average length; they consist of only a single polypeptide chain arranged in a helical configuration of five subunits per turn in the assembled pilus.</text>
</comment>
<comment type="subcellular location">
    <subcellularLocation>
        <location evidence="1">Fimbrium</location>
    </subcellularLocation>
    <subcellularLocation>
        <location evidence="3">Membrane</location>
        <topology evidence="3">Single-pass membrane protein</topology>
    </subcellularLocation>
</comment>
<comment type="similarity">
    <text evidence="5">Belongs to the N-Me-Phe pilin family.</text>
</comment>
<name>FMA2_DICNO</name>
<organism>
    <name type="scientific">Dichelobacter nodosus</name>
    <name type="common">Bacteroides nodosus</name>
    <dbReference type="NCBI Taxonomy" id="870"/>
    <lineage>
        <taxon>Bacteria</taxon>
        <taxon>Pseudomonadati</taxon>
        <taxon>Pseudomonadota</taxon>
        <taxon>Gammaproteobacteria</taxon>
        <taxon>Cardiobacteriales</taxon>
        <taxon>Cardiobacteriaceae</taxon>
        <taxon>Dichelobacter</taxon>
    </lineage>
</organism>
<gene>
    <name type="primary">fimA</name>
</gene>